<name>NDK_CROS8</name>
<organism>
    <name type="scientific">Cronobacter sakazakii (strain ATCC BAA-894)</name>
    <name type="common">Enterobacter sakazakii</name>
    <dbReference type="NCBI Taxonomy" id="290339"/>
    <lineage>
        <taxon>Bacteria</taxon>
        <taxon>Pseudomonadati</taxon>
        <taxon>Pseudomonadota</taxon>
        <taxon>Gammaproteobacteria</taxon>
        <taxon>Enterobacterales</taxon>
        <taxon>Enterobacteriaceae</taxon>
        <taxon>Cronobacter</taxon>
    </lineage>
</organism>
<dbReference type="EC" id="2.7.4.6" evidence="1"/>
<dbReference type="EMBL" id="CP000783">
    <property type="protein sequence ID" value="ABU76016.1"/>
    <property type="molecule type" value="Genomic_DNA"/>
</dbReference>
<dbReference type="RefSeq" id="WP_004386973.1">
    <property type="nucleotide sequence ID" value="NC_009778.1"/>
</dbReference>
<dbReference type="SMR" id="A7MGV2"/>
<dbReference type="GeneID" id="56729626"/>
<dbReference type="KEGG" id="esa:ESA_00739"/>
<dbReference type="HOGENOM" id="CLU_060216_8_1_6"/>
<dbReference type="Proteomes" id="UP000000260">
    <property type="component" value="Chromosome"/>
</dbReference>
<dbReference type="GO" id="GO:0005737">
    <property type="term" value="C:cytoplasm"/>
    <property type="evidence" value="ECO:0007669"/>
    <property type="project" value="UniProtKB-SubCell"/>
</dbReference>
<dbReference type="GO" id="GO:0005524">
    <property type="term" value="F:ATP binding"/>
    <property type="evidence" value="ECO:0007669"/>
    <property type="project" value="UniProtKB-UniRule"/>
</dbReference>
<dbReference type="GO" id="GO:0046872">
    <property type="term" value="F:metal ion binding"/>
    <property type="evidence" value="ECO:0007669"/>
    <property type="project" value="UniProtKB-KW"/>
</dbReference>
<dbReference type="GO" id="GO:0004550">
    <property type="term" value="F:nucleoside diphosphate kinase activity"/>
    <property type="evidence" value="ECO:0007669"/>
    <property type="project" value="UniProtKB-UniRule"/>
</dbReference>
<dbReference type="GO" id="GO:0006241">
    <property type="term" value="P:CTP biosynthetic process"/>
    <property type="evidence" value="ECO:0007669"/>
    <property type="project" value="UniProtKB-UniRule"/>
</dbReference>
<dbReference type="GO" id="GO:0006183">
    <property type="term" value="P:GTP biosynthetic process"/>
    <property type="evidence" value="ECO:0007669"/>
    <property type="project" value="UniProtKB-UniRule"/>
</dbReference>
<dbReference type="GO" id="GO:0006228">
    <property type="term" value="P:UTP biosynthetic process"/>
    <property type="evidence" value="ECO:0007669"/>
    <property type="project" value="UniProtKB-UniRule"/>
</dbReference>
<dbReference type="CDD" id="cd04413">
    <property type="entry name" value="NDPk_I"/>
    <property type="match status" value="1"/>
</dbReference>
<dbReference type="FunFam" id="3.30.70.141:FF:000001">
    <property type="entry name" value="Nucleoside diphosphate kinase"/>
    <property type="match status" value="1"/>
</dbReference>
<dbReference type="Gene3D" id="3.30.70.141">
    <property type="entry name" value="Nucleoside diphosphate kinase-like domain"/>
    <property type="match status" value="1"/>
</dbReference>
<dbReference type="HAMAP" id="MF_00451">
    <property type="entry name" value="NDP_kinase"/>
    <property type="match status" value="1"/>
</dbReference>
<dbReference type="InterPro" id="IPR034907">
    <property type="entry name" value="NDK-like_dom"/>
</dbReference>
<dbReference type="InterPro" id="IPR036850">
    <property type="entry name" value="NDK-like_dom_sf"/>
</dbReference>
<dbReference type="InterPro" id="IPR001564">
    <property type="entry name" value="Nucleoside_diP_kinase"/>
</dbReference>
<dbReference type="InterPro" id="IPR023005">
    <property type="entry name" value="Nucleoside_diP_kinase_AS"/>
</dbReference>
<dbReference type="NCBIfam" id="NF001908">
    <property type="entry name" value="PRK00668.1"/>
    <property type="match status" value="1"/>
</dbReference>
<dbReference type="PANTHER" id="PTHR46161">
    <property type="entry name" value="NUCLEOSIDE DIPHOSPHATE KINASE"/>
    <property type="match status" value="1"/>
</dbReference>
<dbReference type="PANTHER" id="PTHR46161:SF3">
    <property type="entry name" value="NUCLEOSIDE DIPHOSPHATE KINASE DDB_G0292928-RELATED"/>
    <property type="match status" value="1"/>
</dbReference>
<dbReference type="Pfam" id="PF00334">
    <property type="entry name" value="NDK"/>
    <property type="match status" value="1"/>
</dbReference>
<dbReference type="PRINTS" id="PR01243">
    <property type="entry name" value="NUCDPKINASE"/>
</dbReference>
<dbReference type="SMART" id="SM00562">
    <property type="entry name" value="NDK"/>
    <property type="match status" value="1"/>
</dbReference>
<dbReference type="SUPFAM" id="SSF54919">
    <property type="entry name" value="Nucleoside diphosphate kinase, NDK"/>
    <property type="match status" value="1"/>
</dbReference>
<dbReference type="PROSITE" id="PS00469">
    <property type="entry name" value="NDPK"/>
    <property type="match status" value="1"/>
</dbReference>
<dbReference type="PROSITE" id="PS51374">
    <property type="entry name" value="NDPK_LIKE"/>
    <property type="match status" value="1"/>
</dbReference>
<accession>A7MGV2</accession>
<sequence>MAIERTFSIIKPNAVAKNVIGSIFARFESAGFKIIGTKMLHLTVEQARGFYAEHEGKPFFDGLVEFMTSGPIVVSVLESENAVQRHRDLLGATNPANALAGTLRADYADSFTENGTHGSDSVESANREIAYFFGEGEICPRTR</sequence>
<protein>
    <recommendedName>
        <fullName evidence="1">Nucleoside diphosphate kinase</fullName>
        <shortName evidence="1">NDK</shortName>
        <shortName evidence="1">NDP kinase</shortName>
        <ecNumber evidence="1">2.7.4.6</ecNumber>
    </recommendedName>
    <alternativeName>
        <fullName evidence="1">Nucleoside-2-P kinase</fullName>
    </alternativeName>
</protein>
<gene>
    <name evidence="1" type="primary">ndk</name>
    <name type="ordered locus">ESA_00739</name>
</gene>
<reference key="1">
    <citation type="journal article" date="2010" name="PLoS ONE">
        <title>Genome sequence of Cronobacter sakazakii BAA-894 and comparative genomic hybridization analysis with other Cronobacter species.</title>
        <authorList>
            <person name="Kucerova E."/>
            <person name="Clifton S.W."/>
            <person name="Xia X.Q."/>
            <person name="Long F."/>
            <person name="Porwollik S."/>
            <person name="Fulton L."/>
            <person name="Fronick C."/>
            <person name="Minx P."/>
            <person name="Kyung K."/>
            <person name="Warren W."/>
            <person name="Fulton R."/>
            <person name="Feng D."/>
            <person name="Wollam A."/>
            <person name="Shah N."/>
            <person name="Bhonagiri V."/>
            <person name="Nash W.E."/>
            <person name="Hallsworth-Pepin K."/>
            <person name="Wilson R.K."/>
            <person name="McClelland M."/>
            <person name="Forsythe S.J."/>
        </authorList>
    </citation>
    <scope>NUCLEOTIDE SEQUENCE [LARGE SCALE GENOMIC DNA]</scope>
    <source>
        <strain>ATCC BAA-894</strain>
    </source>
</reference>
<evidence type="ECO:0000255" key="1">
    <source>
        <dbReference type="HAMAP-Rule" id="MF_00451"/>
    </source>
</evidence>
<comment type="function">
    <text evidence="1">Major role in the synthesis of nucleoside triphosphates other than ATP. The ATP gamma phosphate is transferred to the NDP beta phosphate via a ping-pong mechanism, using a phosphorylated active-site intermediate.</text>
</comment>
<comment type="catalytic activity">
    <reaction evidence="1">
        <text>a 2'-deoxyribonucleoside 5'-diphosphate + ATP = a 2'-deoxyribonucleoside 5'-triphosphate + ADP</text>
        <dbReference type="Rhea" id="RHEA:44640"/>
        <dbReference type="ChEBI" id="CHEBI:30616"/>
        <dbReference type="ChEBI" id="CHEBI:61560"/>
        <dbReference type="ChEBI" id="CHEBI:73316"/>
        <dbReference type="ChEBI" id="CHEBI:456216"/>
        <dbReference type="EC" id="2.7.4.6"/>
    </reaction>
</comment>
<comment type="catalytic activity">
    <reaction evidence="1">
        <text>a ribonucleoside 5'-diphosphate + ATP = a ribonucleoside 5'-triphosphate + ADP</text>
        <dbReference type="Rhea" id="RHEA:18113"/>
        <dbReference type="ChEBI" id="CHEBI:30616"/>
        <dbReference type="ChEBI" id="CHEBI:57930"/>
        <dbReference type="ChEBI" id="CHEBI:61557"/>
        <dbReference type="ChEBI" id="CHEBI:456216"/>
        <dbReference type="EC" id="2.7.4.6"/>
    </reaction>
</comment>
<comment type="cofactor">
    <cofactor evidence="1">
        <name>Mg(2+)</name>
        <dbReference type="ChEBI" id="CHEBI:18420"/>
    </cofactor>
</comment>
<comment type="subunit">
    <text evidence="1">Homotetramer.</text>
</comment>
<comment type="subcellular location">
    <subcellularLocation>
        <location evidence="1">Cytoplasm</location>
    </subcellularLocation>
</comment>
<comment type="similarity">
    <text evidence="1">Belongs to the NDK family.</text>
</comment>
<feature type="chain" id="PRO_1000026232" description="Nucleoside diphosphate kinase">
    <location>
        <begin position="1"/>
        <end position="143"/>
    </location>
</feature>
<feature type="active site" description="Pros-phosphohistidine intermediate" evidence="1">
    <location>
        <position position="117"/>
    </location>
</feature>
<feature type="binding site" evidence="1">
    <location>
        <position position="11"/>
    </location>
    <ligand>
        <name>ATP</name>
        <dbReference type="ChEBI" id="CHEBI:30616"/>
    </ligand>
</feature>
<feature type="binding site" evidence="1">
    <location>
        <position position="59"/>
    </location>
    <ligand>
        <name>ATP</name>
        <dbReference type="ChEBI" id="CHEBI:30616"/>
    </ligand>
</feature>
<feature type="binding site" evidence="1">
    <location>
        <position position="87"/>
    </location>
    <ligand>
        <name>ATP</name>
        <dbReference type="ChEBI" id="CHEBI:30616"/>
    </ligand>
</feature>
<feature type="binding site" evidence="1">
    <location>
        <position position="93"/>
    </location>
    <ligand>
        <name>ATP</name>
        <dbReference type="ChEBI" id="CHEBI:30616"/>
    </ligand>
</feature>
<feature type="binding site" evidence="1">
    <location>
        <position position="104"/>
    </location>
    <ligand>
        <name>ATP</name>
        <dbReference type="ChEBI" id="CHEBI:30616"/>
    </ligand>
</feature>
<feature type="binding site" evidence="1">
    <location>
        <position position="114"/>
    </location>
    <ligand>
        <name>ATP</name>
        <dbReference type="ChEBI" id="CHEBI:30616"/>
    </ligand>
</feature>
<keyword id="KW-0067">ATP-binding</keyword>
<keyword id="KW-0963">Cytoplasm</keyword>
<keyword id="KW-0418">Kinase</keyword>
<keyword id="KW-0460">Magnesium</keyword>
<keyword id="KW-0479">Metal-binding</keyword>
<keyword id="KW-0546">Nucleotide metabolism</keyword>
<keyword id="KW-0547">Nucleotide-binding</keyword>
<keyword id="KW-0597">Phosphoprotein</keyword>
<keyword id="KW-1185">Reference proteome</keyword>
<keyword id="KW-0808">Transferase</keyword>
<proteinExistence type="inferred from homology"/>